<keyword id="KW-0051">Antiviral defense</keyword>
<keyword id="KW-0963">Cytoplasm</keyword>
<keyword id="KW-0378">Hydrolase</keyword>
<keyword id="KW-0520">NAD</keyword>
<sequence length="190" mass="22002">MGYRNGNYAAFYVSEPFSESSLGANATKDFVSYNMLRAWKGKDNNYPFNDSHDKTYNVRDGSDWEKTLKPRLRKRLDQSKNIIFFLSKHTENSKALREEIDYGINVKGLPVIVVYPELSEKSDIIDCTTKVFRSEVVNLWSRVPVFKDSMLKVPTIHIPYKKDQIKKALENKDFMINSKISAGSVYFYPC</sequence>
<organism>
    <name type="scientific">Bacillus amyloliquefaciens (strain Y2)</name>
    <name type="common">Bacillus amyloliquefaciens subsp. plantarum (strain B9601-Y2)</name>
    <dbReference type="NCBI Taxonomy" id="1155777"/>
    <lineage>
        <taxon>Bacteria</taxon>
        <taxon>Bacillati</taxon>
        <taxon>Bacillota</taxon>
        <taxon>Bacilli</taxon>
        <taxon>Bacillales</taxon>
        <taxon>Bacillaceae</taxon>
        <taxon>Bacillus</taxon>
        <taxon>Bacillus amyloliquefaciens group</taxon>
    </lineage>
</organism>
<dbReference type="EC" id="3.2.2.-" evidence="2"/>
<dbReference type="EMBL" id="CP003332">
    <property type="protein sequence ID" value="AFJ62118.1"/>
    <property type="status" value="ALT_INIT"/>
    <property type="molecule type" value="Genomic_DNA"/>
</dbReference>
<dbReference type="RefSeq" id="WP_014418038.1">
    <property type="nucleotide sequence ID" value="NC_017912.1"/>
</dbReference>
<dbReference type="SMR" id="I2C644"/>
<dbReference type="KEGG" id="bqy:MUS_2159"/>
<dbReference type="KEGG" id="bya:BANAU_1933"/>
<dbReference type="PATRIC" id="fig|1126211.3.peg.2073"/>
<dbReference type="HOGENOM" id="CLU_120365_0_0_9"/>
<dbReference type="Proteomes" id="UP000002878">
    <property type="component" value="Chromosome"/>
</dbReference>
<dbReference type="GO" id="GO:0005737">
    <property type="term" value="C:cytoplasm"/>
    <property type="evidence" value="ECO:0007669"/>
    <property type="project" value="UniProtKB-SubCell"/>
</dbReference>
<dbReference type="GO" id="GO:0016787">
    <property type="term" value="F:hydrolase activity"/>
    <property type="evidence" value="ECO:0007669"/>
    <property type="project" value="UniProtKB-KW"/>
</dbReference>
<dbReference type="GO" id="GO:0051607">
    <property type="term" value="P:defense response to virus"/>
    <property type="evidence" value="ECO:0007669"/>
    <property type="project" value="UniProtKB-KW"/>
</dbReference>
<dbReference type="Gene3D" id="3.40.50.11200">
    <property type="match status" value="1"/>
</dbReference>
<dbReference type="InterPro" id="IPR015032">
    <property type="entry name" value="ThsB__TIR-like_domain"/>
</dbReference>
<dbReference type="Pfam" id="PF08937">
    <property type="entry name" value="ThsB_TIR"/>
    <property type="match status" value="1"/>
</dbReference>
<accession>I2C644</accession>
<comment type="function">
    <text evidence="3 4">TIR-like domain-containing component of the Thoeris antiviral defense system, composed of ThsA and ThsB. Expression of ThsA and ThsB in B.subtilis (strain BEST7003) confers resistance to phages SBSphiC, SBSphiJ and SPO1 (PubMed:29371424). Phage infection activates this protein, generating a signal molecule that in turn activates ThsA (By similarity).</text>
</comment>
<comment type="function">
    <text evidence="2">Probably hydrolyzes NAD(+) to make a cyclic ADP-D-ribose (cADPR) signaling molecule; might make 3'cADPR.</text>
</comment>
<comment type="activity regulation">
    <text evidence="3">Activated upon phage infection.</text>
</comment>
<comment type="subunit">
    <text evidence="1">Homodimer.</text>
</comment>
<comment type="subcellular location">
    <subcellularLocation>
        <location evidence="6">Cytoplasm</location>
    </subcellularLocation>
</comment>
<comment type="disruption phenotype">
    <text evidence="4">When this gene is missing the Thoeris system does not confer phage resistance in B.subtilis.</text>
</comment>
<comment type="similarity">
    <text evidence="6">Belongs to the Thoeris B TIR-like family.</text>
</comment>
<comment type="sequence caution" evidence="7">
    <conflict type="erroneous initiation">
        <sequence resource="EMBL-CDS" id="AFJ62118"/>
    </conflict>
    <text>Truncated N-terminus.</text>
</comment>
<feature type="chain" id="PRO_0000456259" description="Putative cyclic ADP-D-ribose synthase ThsB">
    <location>
        <begin position="1"/>
        <end position="190"/>
    </location>
</feature>
<feature type="mutagenesis site" description="No longer confers resistance to phage SBSphiJ." evidence="4">
    <original>E</original>
    <variation>A</variation>
    <location>
        <position position="99"/>
    </location>
</feature>
<evidence type="ECO:0000250" key="1">
    <source>
        <dbReference type="UniProtKB" id="A0A009IHW8"/>
    </source>
</evidence>
<evidence type="ECO:0000250" key="2">
    <source>
        <dbReference type="UniProtKB" id="J8CSK2"/>
    </source>
</evidence>
<evidence type="ECO:0000250" key="3">
    <source>
        <dbReference type="UniProtKB" id="J8G8J6"/>
    </source>
</evidence>
<evidence type="ECO:0000269" key="4">
    <source>
    </source>
</evidence>
<evidence type="ECO:0000303" key="5">
    <source>
    </source>
</evidence>
<evidence type="ECO:0000305" key="6"/>
<evidence type="ECO:0000305" key="7">
    <source>
    </source>
</evidence>
<evidence type="ECO:0000312" key="8">
    <source>
        <dbReference type="EMBL" id="AFJ62118.1"/>
    </source>
</evidence>
<gene>
    <name evidence="5" type="primary">thsB</name>
    <name evidence="8" type="ORF">MUS_2159</name>
</gene>
<proteinExistence type="evidence at protein level"/>
<name>THSB_BACAY</name>
<protein>
    <recommendedName>
        <fullName evidence="6">Putative cyclic ADP-D-ribose synthase ThsB</fullName>
        <shortName evidence="6">Putative cADPR synthase ThsB</shortName>
        <ecNumber evidence="2">3.2.2.-</ecNumber>
    </recommendedName>
    <alternativeName>
        <fullName evidence="5">Thoeris protein ThsB</fullName>
    </alternativeName>
</protein>
<reference evidence="8" key="1">
    <citation type="journal article" date="2012" name="J. Biotechnol.">
        <title>Genome sequence of the plant growth promoting strain Bacillus amyloliquefaciens subsp. plantarum B9601-Y2 and expression of mersacidin and other secondary metabolites.</title>
        <authorList>
            <person name="He P."/>
            <person name="Hao K."/>
            <person name="Blom J."/>
            <person name="Ruckert C."/>
            <person name="Vater J."/>
            <person name="Mao Z."/>
            <person name="Wu Y."/>
            <person name="Hou M."/>
            <person name="He P."/>
            <person name="He Y."/>
            <person name="Borriss R."/>
        </authorList>
    </citation>
    <scope>NUCLEOTIDE SEQUENCE [LARGE SCALE GENOMIC DNA]</scope>
    <source>
        <strain>Y2</strain>
    </source>
</reference>
<reference key="2">
    <citation type="journal article" date="2018" name="Science">
        <title>Systematic discovery of antiphage defense systems in the microbial pangenome.</title>
        <authorList>
            <person name="Doron S."/>
            <person name="Melamed S."/>
            <person name="Ofir G."/>
            <person name="Leavitt A."/>
            <person name="Lopatina A."/>
            <person name="Keren M."/>
            <person name="Amitai G."/>
            <person name="Sorek R."/>
        </authorList>
    </citation>
    <scope>FUNCTION IN ANTIVIRAL DEFENSE</scope>
    <scope>DISRUPTION PHENOTYPE</scope>
    <scope>MUTAGENESIS OF GLU-99</scope>
    <scope>EXPRESSION IN B.SUBTILIS</scope>
    <source>
        <strain>Y2</strain>
    </source>
</reference>